<reference key="1">
    <citation type="journal article" date="2000" name="Nature">
        <title>Sequence and analysis of chromosome 3 of the plant Arabidopsis thaliana.</title>
        <authorList>
            <person name="Salanoubat M."/>
            <person name="Lemcke K."/>
            <person name="Rieger M."/>
            <person name="Ansorge W."/>
            <person name="Unseld M."/>
            <person name="Fartmann B."/>
            <person name="Valle G."/>
            <person name="Bloecker H."/>
            <person name="Perez-Alonso M."/>
            <person name="Obermaier B."/>
            <person name="Delseny M."/>
            <person name="Boutry M."/>
            <person name="Grivell L.A."/>
            <person name="Mache R."/>
            <person name="Puigdomenech P."/>
            <person name="De Simone V."/>
            <person name="Choisne N."/>
            <person name="Artiguenave F."/>
            <person name="Robert C."/>
            <person name="Brottier P."/>
            <person name="Wincker P."/>
            <person name="Cattolico L."/>
            <person name="Weissenbach J."/>
            <person name="Saurin W."/>
            <person name="Quetier F."/>
            <person name="Schaefer M."/>
            <person name="Mueller-Auer S."/>
            <person name="Gabel C."/>
            <person name="Fuchs M."/>
            <person name="Benes V."/>
            <person name="Wurmbach E."/>
            <person name="Drzonek H."/>
            <person name="Erfle H."/>
            <person name="Jordan N."/>
            <person name="Bangert S."/>
            <person name="Wiedelmann R."/>
            <person name="Kranz H."/>
            <person name="Voss H."/>
            <person name="Holland R."/>
            <person name="Brandt P."/>
            <person name="Nyakatura G."/>
            <person name="Vezzi A."/>
            <person name="D'Angelo M."/>
            <person name="Pallavicini A."/>
            <person name="Toppo S."/>
            <person name="Simionati B."/>
            <person name="Conrad A."/>
            <person name="Hornischer K."/>
            <person name="Kauer G."/>
            <person name="Loehnert T.-H."/>
            <person name="Nordsiek G."/>
            <person name="Reichelt J."/>
            <person name="Scharfe M."/>
            <person name="Schoen O."/>
            <person name="Bargues M."/>
            <person name="Terol J."/>
            <person name="Climent J."/>
            <person name="Navarro P."/>
            <person name="Collado C."/>
            <person name="Perez-Perez A."/>
            <person name="Ottenwaelder B."/>
            <person name="Duchemin D."/>
            <person name="Cooke R."/>
            <person name="Laudie M."/>
            <person name="Berger-Llauro C."/>
            <person name="Purnelle B."/>
            <person name="Masuy D."/>
            <person name="de Haan M."/>
            <person name="Maarse A.C."/>
            <person name="Alcaraz J.-P."/>
            <person name="Cottet A."/>
            <person name="Casacuberta E."/>
            <person name="Monfort A."/>
            <person name="Argiriou A."/>
            <person name="Flores M."/>
            <person name="Liguori R."/>
            <person name="Vitale D."/>
            <person name="Mannhaupt G."/>
            <person name="Haase D."/>
            <person name="Schoof H."/>
            <person name="Rudd S."/>
            <person name="Zaccaria P."/>
            <person name="Mewes H.-W."/>
            <person name="Mayer K.F.X."/>
            <person name="Kaul S."/>
            <person name="Town C.D."/>
            <person name="Koo H.L."/>
            <person name="Tallon L.J."/>
            <person name="Jenkins J."/>
            <person name="Rooney T."/>
            <person name="Rizzo M."/>
            <person name="Walts A."/>
            <person name="Utterback T."/>
            <person name="Fujii C.Y."/>
            <person name="Shea T.P."/>
            <person name="Creasy T.H."/>
            <person name="Haas B."/>
            <person name="Maiti R."/>
            <person name="Wu D."/>
            <person name="Peterson J."/>
            <person name="Van Aken S."/>
            <person name="Pai G."/>
            <person name="Militscher J."/>
            <person name="Sellers P."/>
            <person name="Gill J.E."/>
            <person name="Feldblyum T.V."/>
            <person name="Preuss D."/>
            <person name="Lin X."/>
            <person name="Nierman W.C."/>
            <person name="Salzberg S.L."/>
            <person name="White O."/>
            <person name="Venter J.C."/>
            <person name="Fraser C.M."/>
            <person name="Kaneko T."/>
            <person name="Nakamura Y."/>
            <person name="Sato S."/>
            <person name="Kato T."/>
            <person name="Asamizu E."/>
            <person name="Sasamoto S."/>
            <person name="Kimura T."/>
            <person name="Idesawa K."/>
            <person name="Kawashima K."/>
            <person name="Kishida Y."/>
            <person name="Kiyokawa C."/>
            <person name="Kohara M."/>
            <person name="Matsumoto M."/>
            <person name="Matsuno A."/>
            <person name="Muraki A."/>
            <person name="Nakayama S."/>
            <person name="Nakazaki N."/>
            <person name="Shinpo S."/>
            <person name="Takeuchi C."/>
            <person name="Wada T."/>
            <person name="Watanabe A."/>
            <person name="Yamada M."/>
            <person name="Yasuda M."/>
            <person name="Tabata S."/>
        </authorList>
    </citation>
    <scope>NUCLEOTIDE SEQUENCE [LARGE SCALE GENOMIC DNA]</scope>
    <source>
        <strain>cv. Columbia</strain>
        <tissue>Rosette leaf</tissue>
    </source>
</reference>
<reference key="2">
    <citation type="journal article" date="2017" name="Plant J.">
        <title>Araport11: a complete reannotation of the Arabidopsis thaliana reference genome.</title>
        <authorList>
            <person name="Cheng C.Y."/>
            <person name="Krishnakumar V."/>
            <person name="Chan A.P."/>
            <person name="Thibaud-Nissen F."/>
            <person name="Schobel S."/>
            <person name="Town C.D."/>
        </authorList>
    </citation>
    <scope>GENOME REANNOTATION</scope>
    <source>
        <strain>cv. Columbia</strain>
    </source>
</reference>
<reference key="3">
    <citation type="journal article" date="2003" name="Science">
        <title>Empirical analysis of transcriptional activity in the Arabidopsis genome.</title>
        <authorList>
            <person name="Yamada K."/>
            <person name="Lim J."/>
            <person name="Dale J.M."/>
            <person name="Chen H."/>
            <person name="Shinn P."/>
            <person name="Palm C.J."/>
            <person name="Southwick A.M."/>
            <person name="Wu H.C."/>
            <person name="Kim C.J."/>
            <person name="Nguyen M."/>
            <person name="Pham P.K."/>
            <person name="Cheuk R.F."/>
            <person name="Karlin-Newmann G."/>
            <person name="Liu S.X."/>
            <person name="Lam B."/>
            <person name="Sakano H."/>
            <person name="Wu T."/>
            <person name="Yu G."/>
            <person name="Miranda M."/>
            <person name="Quach H.L."/>
            <person name="Tripp M."/>
            <person name="Chang C.H."/>
            <person name="Lee J.M."/>
            <person name="Toriumi M.J."/>
            <person name="Chan M.M."/>
            <person name="Tang C.C."/>
            <person name="Onodera C.S."/>
            <person name="Deng J.M."/>
            <person name="Akiyama K."/>
            <person name="Ansari Y."/>
            <person name="Arakawa T."/>
            <person name="Banh J."/>
            <person name="Banno F."/>
            <person name="Bowser L."/>
            <person name="Brooks S.Y."/>
            <person name="Carninci P."/>
            <person name="Chao Q."/>
            <person name="Choy N."/>
            <person name="Enju A."/>
            <person name="Goldsmith A.D."/>
            <person name="Gurjal M."/>
            <person name="Hansen N.F."/>
            <person name="Hayashizaki Y."/>
            <person name="Johnson-Hopson C."/>
            <person name="Hsuan V.W."/>
            <person name="Iida K."/>
            <person name="Karnes M."/>
            <person name="Khan S."/>
            <person name="Koesema E."/>
            <person name="Ishida J."/>
            <person name="Jiang P.X."/>
            <person name="Jones T."/>
            <person name="Kawai J."/>
            <person name="Kamiya A."/>
            <person name="Meyers C."/>
            <person name="Nakajima M."/>
            <person name="Narusaka M."/>
            <person name="Seki M."/>
            <person name="Sakurai T."/>
            <person name="Satou M."/>
            <person name="Tamse R."/>
            <person name="Vaysberg M."/>
            <person name="Wallender E.K."/>
            <person name="Wong C."/>
            <person name="Yamamura Y."/>
            <person name="Yuan S."/>
            <person name="Shinozaki K."/>
            <person name="Davis R.W."/>
            <person name="Theologis A."/>
            <person name="Ecker J.R."/>
        </authorList>
    </citation>
    <scope>NUCLEOTIDE SEQUENCE [LARGE SCALE MRNA] (ISOFORM 2)</scope>
    <source>
        <strain>cv. Columbia</strain>
    </source>
</reference>
<reference key="4">
    <citation type="journal article" date="2009" name="DNA Res.">
        <title>Analysis of multiple occurrences of alternative splicing events in Arabidopsis thaliana using novel sequenced full-length cDNAs.</title>
        <authorList>
            <person name="Iida K."/>
            <person name="Fukami-Kobayashi K."/>
            <person name="Toyoda A."/>
            <person name="Sakaki Y."/>
            <person name="Kobayashi M."/>
            <person name="Seki M."/>
            <person name="Shinozaki K."/>
        </authorList>
    </citation>
    <scope>NUCLEOTIDE SEQUENCE [LARGE SCALE MRNA] (ISOFORM 1)</scope>
    <source>
        <strain>cv. Columbia</strain>
    </source>
</reference>
<reference key="5">
    <citation type="journal article" date="2006" name="Mol. Biol. Evol.">
        <title>Survey of conserved alternative splicing events of mRNAs encoding SR proteins in land plants.</title>
        <authorList>
            <person name="Iida K."/>
            <person name="Go M."/>
        </authorList>
    </citation>
    <scope>ALTERNATIVE SPLICING</scope>
</reference>
<reference key="6">
    <citation type="journal article" date="2006" name="Nucleic Acids Res.">
        <title>Evolutionary conservation and regulation of particular alternative splicing events in plant SR proteins.</title>
        <authorList>
            <person name="Kalyna M."/>
            <person name="Lopato S."/>
            <person name="Voronin V."/>
            <person name="Barta A."/>
        </authorList>
    </citation>
    <scope>ALTERNATIVE SPLICING</scope>
</reference>
<reference key="7">
    <citation type="journal article" date="2007" name="Plant J.">
        <title>Alternative splicing of pre-mRNAs of Arabidopsis serine/arginine-rich proteins: regulation by hormones and stresses.</title>
        <authorList>
            <person name="Palusa S.G."/>
            <person name="Ali G.S."/>
            <person name="Reddy A.S."/>
        </authorList>
    </citation>
    <scope>ALTERNATIVE SPLICING</scope>
    <scope>INDUCTION</scope>
</reference>
<reference key="8">
    <citation type="journal article" date="2009" name="J. Proteomics">
        <title>Phosphoproteomic analysis of nuclei-enriched fractions from Arabidopsis thaliana.</title>
        <authorList>
            <person name="Jones A.M.E."/>
            <person name="MacLean D."/>
            <person name="Studholme D.J."/>
            <person name="Serna-Sanz A."/>
            <person name="Andreasson E."/>
            <person name="Rathjen J.P."/>
            <person name="Peck S.C."/>
        </authorList>
    </citation>
    <scope>PHOSPHORYLATION [LARGE SCALE ANALYSIS] AT SER-265</scope>
    <scope>IDENTIFICATION BY MASS SPECTROMETRY [LARGE SCALE ANALYSIS]</scope>
    <source>
        <strain>cv. Columbia</strain>
    </source>
</reference>
<reference key="9">
    <citation type="journal article" date="2009" name="Plant Physiol.">
        <title>Large-scale Arabidopsis phosphoproteome profiling reveals novel chloroplast kinase substrates and phosphorylation networks.</title>
        <authorList>
            <person name="Reiland S."/>
            <person name="Messerli G."/>
            <person name="Baerenfaller K."/>
            <person name="Gerrits B."/>
            <person name="Endler A."/>
            <person name="Grossmann J."/>
            <person name="Gruissem W."/>
            <person name="Baginsky S."/>
        </authorList>
    </citation>
    <scope>PHOSPHORYLATION [LARGE SCALE ANALYSIS] AT SER-214; SER-216 AND SER-225</scope>
    <scope>IDENTIFICATION BY MASS SPECTROMETRY [LARGE SCALE ANALYSIS]</scope>
</reference>
<reference key="10">
    <citation type="journal article" date="2010" name="Plant Cell">
        <title>Implementing a rational and consistent nomenclature for serine/arginine-rich protein splicing factors (SR proteins) in plants.</title>
        <authorList>
            <person name="Barta A."/>
            <person name="Kalyna M."/>
            <person name="Reddy A.S."/>
        </authorList>
    </citation>
    <scope>GENE FAMILY</scope>
    <scope>NOMENCLATURE</scope>
</reference>
<reference key="11">
    <citation type="journal article" date="2011" name="PLoS ONE">
        <title>Comparative analysis of serine/arginine-rich proteins across 27 eukaryotes: insights into sub-family classification and extent of alternative splicing.</title>
        <authorList>
            <person name="Richardson D.N."/>
            <person name="Rogers M.F."/>
            <person name="Labadorf A."/>
            <person name="Ben-Hur A."/>
            <person name="Guo H."/>
            <person name="Paterson A.H."/>
            <person name="Reddy A.S.N."/>
        </authorList>
    </citation>
    <scope>GENE FAMILY</scope>
</reference>
<gene>
    <name type="primary">RS2Z32</name>
    <name type="synonym">RSZ32</name>
    <name type="synonym">RSZ34</name>
    <name type="ordered locus">At3g53500</name>
    <name type="ORF">F4P12.200</name>
</gene>
<feature type="chain" id="PRO_0000416997" description="Serine/arginine-rich splicing factor RS2Z32">
    <location>
        <begin position="1"/>
        <end position="284"/>
    </location>
</feature>
<feature type="domain" description="RRM" evidence="8">
    <location>
        <begin position="11"/>
        <end position="81"/>
    </location>
</feature>
<feature type="zinc finger region" description="CCHC-type 1" evidence="7">
    <location>
        <begin position="99"/>
        <end position="116"/>
    </location>
</feature>
<feature type="zinc finger region" description="CCHC-type 2" evidence="7">
    <location>
        <begin position="121"/>
        <end position="138"/>
    </location>
</feature>
<feature type="region of interest" description="Disordered" evidence="9">
    <location>
        <begin position="74"/>
        <end position="97"/>
    </location>
</feature>
<feature type="region of interest" description="Disordered" evidence="9">
    <location>
        <begin position="132"/>
        <end position="284"/>
    </location>
</feature>
<feature type="compositionally biased region" description="Basic residues" evidence="9">
    <location>
        <begin position="159"/>
        <end position="180"/>
    </location>
</feature>
<feature type="compositionally biased region" description="Basic and acidic residues" evidence="9">
    <location>
        <begin position="186"/>
        <end position="203"/>
    </location>
</feature>
<feature type="compositionally biased region" description="Basic and acidic residues" evidence="9">
    <location>
        <begin position="209"/>
        <end position="236"/>
    </location>
</feature>
<feature type="modified residue" description="Phosphoserine" evidence="2">
    <location>
        <position position="166"/>
    </location>
</feature>
<feature type="modified residue" description="Phosphoserine" evidence="2">
    <location>
        <position position="168"/>
    </location>
</feature>
<feature type="modified residue" description="Phosphoserine" evidence="3">
    <location>
        <position position="184"/>
    </location>
</feature>
<feature type="modified residue" description="Phosphoserine" evidence="5">
    <location>
        <position position="205"/>
    </location>
</feature>
<feature type="modified residue" description="Phosphoserine" evidence="5">
    <location>
        <position position="207"/>
    </location>
</feature>
<feature type="modified residue" description="Phosphoserine" evidence="14">
    <location>
        <position position="214"/>
    </location>
</feature>
<feature type="modified residue" description="Phosphoserine" evidence="14">
    <location>
        <position position="216"/>
    </location>
</feature>
<feature type="modified residue" description="Phosphoserine" evidence="14">
    <location>
        <position position="225"/>
    </location>
</feature>
<feature type="modified residue" description="Phosphoserine" evidence="6">
    <location>
        <position position="235"/>
    </location>
</feature>
<feature type="modified residue" description="Phosphoserine" evidence="3">
    <location>
        <position position="255"/>
    </location>
</feature>
<feature type="modified residue" description="Phosphoserine" evidence="13">
    <location>
        <position position="265"/>
    </location>
</feature>
<feature type="modified residue" description="Phosphoserine" evidence="4">
    <location>
        <position position="277"/>
    </location>
</feature>
<feature type="modified residue" description="Phosphoserine" evidence="4">
    <location>
        <position position="281"/>
    </location>
</feature>
<feature type="splice variant" id="VSP_043111" description="In isoform 2." evidence="10">
    <location>
        <begin position="1"/>
        <end position="41"/>
    </location>
</feature>
<protein>
    <recommendedName>
        <fullName>Serine/arginine-rich splicing factor RS2Z32</fullName>
    </recommendedName>
    <alternativeName>
        <fullName>RS-containing zinc finger protein 32</fullName>
        <shortName>At-RS2Z32</shortName>
        <shortName>At-RSZ32</shortName>
        <shortName>AtRSZ32</shortName>
    </alternativeName>
    <alternativeName>
        <fullName>Serine/arginine-rich splicing factor RSZ34</fullName>
        <shortName>AtRSZ34</shortName>
    </alternativeName>
</protein>
<keyword id="KW-0025">Alternative splicing</keyword>
<keyword id="KW-0479">Metal-binding</keyword>
<keyword id="KW-0507">mRNA processing</keyword>
<keyword id="KW-0508">mRNA splicing</keyword>
<keyword id="KW-0539">Nucleus</keyword>
<keyword id="KW-0597">Phosphoprotein</keyword>
<keyword id="KW-1185">Reference proteome</keyword>
<keyword id="KW-0677">Repeat</keyword>
<keyword id="KW-0747">Spliceosome</keyword>
<keyword id="KW-0862">Zinc</keyword>
<keyword id="KW-0863">Zinc-finger</keyword>
<organism>
    <name type="scientific">Arabidopsis thaliana</name>
    <name type="common">Mouse-ear cress</name>
    <dbReference type="NCBI Taxonomy" id="3702"/>
    <lineage>
        <taxon>Eukaryota</taxon>
        <taxon>Viridiplantae</taxon>
        <taxon>Streptophyta</taxon>
        <taxon>Embryophyta</taxon>
        <taxon>Tracheophyta</taxon>
        <taxon>Spermatophyta</taxon>
        <taxon>Magnoliopsida</taxon>
        <taxon>eudicotyledons</taxon>
        <taxon>Gunneridae</taxon>
        <taxon>Pentapetalae</taxon>
        <taxon>rosids</taxon>
        <taxon>malvids</taxon>
        <taxon>Brassicales</taxon>
        <taxon>Brassicaceae</taxon>
        <taxon>Camelineae</taxon>
        <taxon>Arabidopsis</taxon>
    </lineage>
</organism>
<sequence length="284" mass="31823">MPRYDDRYGNTRLYVGRLSSRTRTRDLERLFSRYGRVRDVDMKRDYAFVEFSDPRDADDARYYLDGRDFDGSRITVEASRGAPRGSRDNGSRGPPPGSGRCFNCGVDGHWARDCTAGDWKNKCYRCGERGHIERNCKNSPSPKKARQGGSYSRSPVKSRSPRRRRSPSRSRSYSRGRSYSRSRSPVRREKSVEDRSRSPKAMERSVSPKGRDQSLSPDRKVIDASPKRGSDYDGSPKENGNGRNSASPIVGGGESPVGLNGQDRSPIDDEAELSRPSPKGSESP</sequence>
<name>RSZ32_ARATH</name>
<accession>Q9FYB7</accession>
<accession>Q8LPN6</accession>
<evidence type="ECO:0000250" key="1"/>
<evidence type="ECO:0000250" key="2">
    <source>
        <dbReference type="UniProtKB" id="P92964"/>
    </source>
</evidence>
<evidence type="ECO:0000250" key="3">
    <source>
        <dbReference type="UniProtKB" id="P92965"/>
    </source>
</evidence>
<evidence type="ECO:0000250" key="4">
    <source>
        <dbReference type="UniProtKB" id="P92966"/>
    </source>
</evidence>
<evidence type="ECO:0000250" key="5">
    <source>
        <dbReference type="UniProtKB" id="Q8VYA5"/>
    </source>
</evidence>
<evidence type="ECO:0000250" key="6">
    <source>
        <dbReference type="UniProtKB" id="Q9SJA6"/>
    </source>
</evidence>
<evidence type="ECO:0000255" key="7">
    <source>
        <dbReference type="PROSITE-ProRule" id="PRU00047"/>
    </source>
</evidence>
<evidence type="ECO:0000255" key="8">
    <source>
        <dbReference type="PROSITE-ProRule" id="PRU00176"/>
    </source>
</evidence>
<evidence type="ECO:0000256" key="9">
    <source>
        <dbReference type="SAM" id="MobiDB-lite"/>
    </source>
</evidence>
<evidence type="ECO:0000303" key="10">
    <source>
    </source>
</evidence>
<evidence type="ECO:0000305" key="11"/>
<evidence type="ECO:0000305" key="12">
    <source>
    </source>
</evidence>
<evidence type="ECO:0007744" key="13">
    <source>
    </source>
</evidence>
<evidence type="ECO:0007744" key="14">
    <source>
    </source>
</evidence>
<comment type="function">
    <text>Probably involved in intron recognition and spliceosome assembly.</text>
</comment>
<comment type="subunit">
    <text>Component of the spliceosome.</text>
</comment>
<comment type="subcellular location">
    <subcellularLocation>
        <location evidence="1">Nucleus</location>
    </subcellularLocation>
</comment>
<comment type="alternative products">
    <event type="alternative splicing"/>
    <isoform>
        <id>Q9FYB7-1</id>
        <name>1</name>
        <sequence type="displayed"/>
    </isoform>
    <isoform>
        <id>Q9FYB7-2</id>
        <name>2</name>
        <sequence type="described" ref="VSP_043111"/>
    </isoform>
</comment>
<comment type="PTM">
    <text>Extensively phosphorylated on serine residues in the RS domain.</text>
</comment>
<comment type="miscellaneous">
    <text evidence="12">The splicing pattern of the pre-mRNA is regulated in a tissue-specific manner and by development, and changes in response to various types of abiotic stresses.</text>
</comment>
<comment type="similarity">
    <text evidence="11">Belongs to the splicing factor SR family. RS2Z subfamily.</text>
</comment>
<proteinExistence type="evidence at protein level"/>
<dbReference type="EMBL" id="AL132966">
    <property type="protein sequence ID" value="CAB67657.2"/>
    <property type="molecule type" value="Genomic_DNA"/>
</dbReference>
<dbReference type="EMBL" id="CP002686">
    <property type="protein sequence ID" value="AEE79097.1"/>
    <property type="molecule type" value="Genomic_DNA"/>
</dbReference>
<dbReference type="EMBL" id="CP002686">
    <property type="protein sequence ID" value="AEE79098.1"/>
    <property type="molecule type" value="Genomic_DNA"/>
</dbReference>
<dbReference type="EMBL" id="CP002686">
    <property type="protein sequence ID" value="ANM64556.1"/>
    <property type="molecule type" value="Genomic_DNA"/>
</dbReference>
<dbReference type="EMBL" id="AY095996">
    <property type="protein sequence ID" value="AAM19952.1"/>
    <property type="molecule type" value="mRNA"/>
</dbReference>
<dbReference type="EMBL" id="BT001034">
    <property type="protein sequence ID" value="AAN46788.1"/>
    <property type="molecule type" value="mRNA"/>
</dbReference>
<dbReference type="EMBL" id="AK316697">
    <property type="protein sequence ID" value="BAH19424.1"/>
    <property type="molecule type" value="mRNA"/>
</dbReference>
<dbReference type="PIR" id="F84791">
    <property type="entry name" value="F84791"/>
</dbReference>
<dbReference type="PIR" id="T45890">
    <property type="entry name" value="T45890"/>
</dbReference>
<dbReference type="RefSeq" id="NP_001326575.1">
    <molecule id="Q9FYB7-2"/>
    <property type="nucleotide sequence ID" value="NM_001339619.1"/>
</dbReference>
<dbReference type="RefSeq" id="NP_190918.3">
    <molecule id="Q9FYB7-1"/>
    <property type="nucleotide sequence ID" value="NM_115210.6"/>
</dbReference>
<dbReference type="RefSeq" id="NP_851015.1">
    <molecule id="Q9FYB7-2"/>
    <property type="nucleotide sequence ID" value="NM_180684.4"/>
</dbReference>
<dbReference type="SMR" id="Q9FYB7"/>
<dbReference type="BioGRID" id="9835">
    <property type="interactions" value="4"/>
</dbReference>
<dbReference type="FunCoup" id="Q9FYB7">
    <property type="interactions" value="1110"/>
</dbReference>
<dbReference type="STRING" id="3702.Q9FYB7"/>
<dbReference type="iPTMnet" id="Q9FYB7"/>
<dbReference type="PaxDb" id="3702-AT3G53500.2"/>
<dbReference type="ProteomicsDB" id="226690">
    <molecule id="Q9FYB7-1"/>
</dbReference>
<dbReference type="EnsemblPlants" id="AT3G53500.1">
    <molecule id="Q9FYB7-2"/>
    <property type="protein sequence ID" value="AT3G53500.1"/>
    <property type="gene ID" value="AT3G53500"/>
</dbReference>
<dbReference type="EnsemblPlants" id="AT3G53500.2">
    <molecule id="Q9FYB7-1"/>
    <property type="protein sequence ID" value="AT3G53500.2"/>
    <property type="gene ID" value="AT3G53500"/>
</dbReference>
<dbReference type="EnsemblPlants" id="AT3G53500.3">
    <molecule id="Q9FYB7-2"/>
    <property type="protein sequence ID" value="AT3G53500.3"/>
    <property type="gene ID" value="AT3G53500"/>
</dbReference>
<dbReference type="GeneID" id="824518"/>
<dbReference type="Gramene" id="AT3G53500.1">
    <molecule id="Q9FYB7-2"/>
    <property type="protein sequence ID" value="AT3G53500.1"/>
    <property type="gene ID" value="AT3G53500"/>
</dbReference>
<dbReference type="Gramene" id="AT3G53500.2">
    <molecule id="Q9FYB7-1"/>
    <property type="protein sequence ID" value="AT3G53500.2"/>
    <property type="gene ID" value="AT3G53500"/>
</dbReference>
<dbReference type="Gramene" id="AT3G53500.3">
    <molecule id="Q9FYB7-2"/>
    <property type="protein sequence ID" value="AT3G53500.3"/>
    <property type="gene ID" value="AT3G53500"/>
</dbReference>
<dbReference type="KEGG" id="ath:AT3G53500"/>
<dbReference type="Araport" id="AT3G53500"/>
<dbReference type="TAIR" id="AT3G53500">
    <property type="gene designation" value="RS2Z32"/>
</dbReference>
<dbReference type="eggNOG" id="KOG0107">
    <property type="taxonomic scope" value="Eukaryota"/>
</dbReference>
<dbReference type="HOGENOM" id="CLU_047187_3_0_1"/>
<dbReference type="InParanoid" id="Q9FYB7"/>
<dbReference type="OMA" id="RIRIRYS"/>
<dbReference type="PhylomeDB" id="Q9FYB7"/>
<dbReference type="CD-CODE" id="4299E36E">
    <property type="entry name" value="Nucleolus"/>
</dbReference>
<dbReference type="PRO" id="PR:Q9FYB7"/>
<dbReference type="Proteomes" id="UP000006548">
    <property type="component" value="Chromosome 3"/>
</dbReference>
<dbReference type="ExpressionAtlas" id="Q9FYB7">
    <property type="expression patterns" value="baseline and differential"/>
</dbReference>
<dbReference type="GO" id="GO:0005681">
    <property type="term" value="C:spliceosomal complex"/>
    <property type="evidence" value="ECO:0007669"/>
    <property type="project" value="UniProtKB-KW"/>
</dbReference>
<dbReference type="GO" id="GO:0003729">
    <property type="term" value="F:mRNA binding"/>
    <property type="evidence" value="ECO:0000314"/>
    <property type="project" value="TAIR"/>
</dbReference>
<dbReference type="GO" id="GO:0008270">
    <property type="term" value="F:zinc ion binding"/>
    <property type="evidence" value="ECO:0007669"/>
    <property type="project" value="UniProtKB-KW"/>
</dbReference>
<dbReference type="GO" id="GO:0000398">
    <property type="term" value="P:mRNA splicing, via spliceosome"/>
    <property type="evidence" value="ECO:0000304"/>
    <property type="project" value="TAIR"/>
</dbReference>
<dbReference type="GO" id="GO:0008380">
    <property type="term" value="P:RNA splicing"/>
    <property type="evidence" value="ECO:0000303"/>
    <property type="project" value="TAIR"/>
</dbReference>
<dbReference type="FunFam" id="3.30.70.330:FF:000272">
    <property type="entry name" value="Serine/arginine-rich splicing factor RS2Z32"/>
    <property type="match status" value="1"/>
</dbReference>
<dbReference type="FunFam" id="4.10.60.10:FF:000003">
    <property type="entry name" value="serine/arginine-rich splicing factor RS2Z32-like isoform X1"/>
    <property type="match status" value="1"/>
</dbReference>
<dbReference type="Gene3D" id="3.30.70.330">
    <property type="match status" value="1"/>
</dbReference>
<dbReference type="Gene3D" id="4.10.60.10">
    <property type="entry name" value="Zinc finger, CCHC-type"/>
    <property type="match status" value="2"/>
</dbReference>
<dbReference type="InterPro" id="IPR012677">
    <property type="entry name" value="Nucleotide-bd_a/b_plait_sf"/>
</dbReference>
<dbReference type="InterPro" id="IPR035979">
    <property type="entry name" value="RBD_domain_sf"/>
</dbReference>
<dbReference type="InterPro" id="IPR000504">
    <property type="entry name" value="RRM_dom"/>
</dbReference>
<dbReference type="InterPro" id="IPR001878">
    <property type="entry name" value="Znf_CCHC"/>
</dbReference>
<dbReference type="InterPro" id="IPR036875">
    <property type="entry name" value="Znf_CCHC_sf"/>
</dbReference>
<dbReference type="PANTHER" id="PTHR48038">
    <property type="entry name" value="RIBONUCLEOPROTEIN RB97D"/>
    <property type="match status" value="1"/>
</dbReference>
<dbReference type="PANTHER" id="PTHR48038:SF1">
    <property type="entry name" value="RIBONUCLEOPROTEIN RB97D"/>
    <property type="match status" value="1"/>
</dbReference>
<dbReference type="Pfam" id="PF00076">
    <property type="entry name" value="RRM_1"/>
    <property type="match status" value="1"/>
</dbReference>
<dbReference type="Pfam" id="PF00098">
    <property type="entry name" value="zf-CCHC"/>
    <property type="match status" value="2"/>
</dbReference>
<dbReference type="SMART" id="SM00360">
    <property type="entry name" value="RRM"/>
    <property type="match status" value="1"/>
</dbReference>
<dbReference type="SMART" id="SM00343">
    <property type="entry name" value="ZnF_C2HC"/>
    <property type="match status" value="2"/>
</dbReference>
<dbReference type="SUPFAM" id="SSF57756">
    <property type="entry name" value="Retrovirus zinc finger-like domains"/>
    <property type="match status" value="1"/>
</dbReference>
<dbReference type="SUPFAM" id="SSF54928">
    <property type="entry name" value="RNA-binding domain, RBD"/>
    <property type="match status" value="1"/>
</dbReference>
<dbReference type="PROSITE" id="PS50102">
    <property type="entry name" value="RRM"/>
    <property type="match status" value="1"/>
</dbReference>
<dbReference type="PROSITE" id="PS50158">
    <property type="entry name" value="ZF_CCHC"/>
    <property type="match status" value="2"/>
</dbReference>